<evidence type="ECO:0000305" key="1"/>
<comment type="function">
    <text>Elimination of the ALEP-1 gene from all somatic cells in its fully activate state may represent an alternative way to gene regulation.</text>
</comment>
<comment type="developmental stage">
    <text>Oocytes and early embryonic stages up to its elimination.</text>
</comment>
<comment type="similarity">
    <text evidence="1">Belongs to the eukaryotic ribosomal protein eS19 family.</text>
</comment>
<accession>P24494</accession>
<reference key="1">
    <citation type="journal article" date="1991" name="Proc. Natl. Acad. Sci. U.S.A.">
        <title>Eliminated chromatin of Ascaris contains a gene that encodes a putative ribosomal protein.</title>
        <authorList>
            <person name="Etter A."/>
            <person name="Aboutanos M."/>
            <person name="Tobler H."/>
            <person name="Mueller F."/>
        </authorList>
    </citation>
    <scope>NUCLEOTIDE SEQUENCE [MRNA]</scope>
</reference>
<reference key="2">
    <citation type="submission" date="1993-11" db="EMBL/GenBank/DDBJ databases">
        <authorList>
            <person name="Etter A."/>
        </authorList>
    </citation>
    <scope>NUCLEOTIDE SEQUENCE</scope>
</reference>
<name>RS19G_ASCSU</name>
<feature type="chain" id="PRO_0000153821" description="Small ribosomal subunit protein eS19G">
    <location>
        <begin position="1"/>
        <end position="148"/>
    </location>
</feature>
<feature type="sequence variant">
    <original>E</original>
    <variation>D</variation>
    <location>
        <position position="33"/>
    </location>
</feature>
<protein>
    <recommendedName>
        <fullName evidence="1">Small ribosomal subunit protein eS19G</fullName>
    </recommendedName>
    <alternativeName>
        <fullName>40S ribosomal protein S19G</fullName>
    </alternativeName>
    <alternativeName>
        <fullName>Eliminated protein NO. 1</fullName>
    </alternativeName>
</protein>
<organism>
    <name type="scientific">Ascaris suum</name>
    <name type="common">Pig roundworm</name>
    <name type="synonym">Ascaris lumbricoides</name>
    <dbReference type="NCBI Taxonomy" id="6253"/>
    <lineage>
        <taxon>Eukaryota</taxon>
        <taxon>Metazoa</taxon>
        <taxon>Ecdysozoa</taxon>
        <taxon>Nematoda</taxon>
        <taxon>Chromadorea</taxon>
        <taxon>Rhabditida</taxon>
        <taxon>Spirurina</taxon>
        <taxon>Ascaridomorpha</taxon>
        <taxon>Ascaridoidea</taxon>
        <taxon>Ascarididae</taxon>
        <taxon>Ascaris</taxon>
    </lineage>
</organism>
<dbReference type="EMBL" id="M59417">
    <property type="protein sequence ID" value="AAA29369.1"/>
    <property type="molecule type" value="mRNA"/>
</dbReference>
<dbReference type="EMBL" id="X75543">
    <property type="protein sequence ID" value="CAA53231.1"/>
    <property type="molecule type" value="Genomic_DNA"/>
</dbReference>
<dbReference type="SMR" id="P24494"/>
<dbReference type="GO" id="GO:0022627">
    <property type="term" value="C:cytosolic small ribosomal subunit"/>
    <property type="evidence" value="ECO:0007669"/>
    <property type="project" value="TreeGrafter"/>
</dbReference>
<dbReference type="GO" id="GO:0003723">
    <property type="term" value="F:RNA binding"/>
    <property type="evidence" value="ECO:0007669"/>
    <property type="project" value="TreeGrafter"/>
</dbReference>
<dbReference type="GO" id="GO:0003735">
    <property type="term" value="F:structural constituent of ribosome"/>
    <property type="evidence" value="ECO:0007669"/>
    <property type="project" value="InterPro"/>
</dbReference>
<dbReference type="GO" id="GO:0000028">
    <property type="term" value="P:ribosomal small subunit assembly"/>
    <property type="evidence" value="ECO:0007669"/>
    <property type="project" value="TreeGrafter"/>
</dbReference>
<dbReference type="GO" id="GO:0006412">
    <property type="term" value="P:translation"/>
    <property type="evidence" value="ECO:0007669"/>
    <property type="project" value="InterPro"/>
</dbReference>
<dbReference type="FunFam" id="1.10.10.10:FF:000118">
    <property type="entry name" value="40S ribosomal protein S19"/>
    <property type="match status" value="1"/>
</dbReference>
<dbReference type="Gene3D" id="1.10.10.10">
    <property type="entry name" value="Winged helix-like DNA-binding domain superfamily/Winged helix DNA-binding domain"/>
    <property type="match status" value="1"/>
</dbReference>
<dbReference type="InterPro" id="IPR001266">
    <property type="entry name" value="Ribosomal_eS19"/>
</dbReference>
<dbReference type="InterPro" id="IPR018277">
    <property type="entry name" value="Ribosomal_eS19_CS"/>
</dbReference>
<dbReference type="InterPro" id="IPR036388">
    <property type="entry name" value="WH-like_DNA-bd_sf"/>
</dbReference>
<dbReference type="InterPro" id="IPR036390">
    <property type="entry name" value="WH_DNA-bd_sf"/>
</dbReference>
<dbReference type="PANTHER" id="PTHR11710">
    <property type="entry name" value="40S RIBOSOMAL PROTEIN S19"/>
    <property type="match status" value="1"/>
</dbReference>
<dbReference type="PANTHER" id="PTHR11710:SF0">
    <property type="entry name" value="40S RIBOSOMAL PROTEIN S19"/>
    <property type="match status" value="1"/>
</dbReference>
<dbReference type="Pfam" id="PF01090">
    <property type="entry name" value="Ribosomal_S19e"/>
    <property type="match status" value="1"/>
</dbReference>
<dbReference type="SMART" id="SM01413">
    <property type="entry name" value="Ribosomal_S19e"/>
    <property type="match status" value="1"/>
</dbReference>
<dbReference type="SUPFAM" id="SSF46785">
    <property type="entry name" value="Winged helix' DNA-binding domain"/>
    <property type="match status" value="1"/>
</dbReference>
<dbReference type="PROSITE" id="PS00628">
    <property type="entry name" value="RIBOSOMAL_S19E"/>
    <property type="match status" value="1"/>
</dbReference>
<gene>
    <name type="primary">RPS19G</name>
    <name type="synonym">ALEP-1</name>
</gene>
<keyword id="KW-0687">Ribonucleoprotein</keyword>
<keyword id="KW-0689">Ribosomal protein</keyword>
<sequence length="148" mass="16684">MVKATSVKDVDQHEIVQHIAKFLKKSGKVKVPEWSDVTKMGISKELAPLNSDWYYVRTASIARRLYVRSPTGVDALRLVYGGSKRRGVVPNHFAKASGSVIRKALQTLEAIKWVQKHPDGNGRVLTKQGRKDLDRIASQMRQNDRFTA</sequence>
<proteinExistence type="evidence at transcript level"/>